<accession>Q2T9W0</accession>
<keyword id="KW-0539">Nucleus</keyword>
<keyword id="KW-1185">Reference proteome</keyword>
<keyword id="KW-0833">Ubl conjugation pathway</keyword>
<proteinExistence type="evidence at transcript level"/>
<sequence length="329" mass="36425">MSAEASGPAAAEAPSLEVAKPSELEPGSAAYGLKPLTTNSKYVKLNVGGSLHYTTLRTLTGQDTRLKAMFSGRAEVLTDAGGWVLIDRSGRHFGTILNYLRDGSVPLPESTRELGELLGEARHYLVQGLIEDCQLALQQKRENVSPLCLIPTVTSPREEQQLLASTSKPVVKLLHNRSNNKYSYTSTSDDNLLKNIELFDKLALRFHGRLLFLKDVLGDEICCWSFYGQGRKIAEVCCTSIVYATEKKQTKVEFPEARIFEETLNILIYETPRGPDPALLEATGGAAGGGGASRGEDEDNREHRVRRIHVRRHITHDERPHGQQIVFKD</sequence>
<reference key="1">
    <citation type="submission" date="2005-12" db="EMBL/GenBank/DDBJ databases">
        <authorList>
            <consortium name="NIH - Mammalian Gene Collection (MGC) project"/>
        </authorList>
    </citation>
    <scope>NUCLEOTIDE SEQUENCE [LARGE SCALE MRNA]</scope>
    <source>
        <strain>Crossbred X Angus</strain>
        <tissue>Liver</tissue>
    </source>
</reference>
<feature type="chain" id="PRO_0000283061" description="BTB/POZ domain-containing adapter for CUL3-mediated RhoA degradation protein 1">
    <location>
        <begin position="1"/>
        <end position="329"/>
    </location>
</feature>
<feature type="domain" description="BTB">
    <location>
        <begin position="41"/>
        <end position="109"/>
    </location>
</feature>
<feature type="region of interest" description="Disordered" evidence="3">
    <location>
        <begin position="1"/>
        <end position="21"/>
    </location>
</feature>
<feature type="region of interest" description="Disordered" evidence="3">
    <location>
        <begin position="280"/>
        <end position="302"/>
    </location>
</feature>
<feature type="compositionally biased region" description="Low complexity" evidence="3">
    <location>
        <begin position="1"/>
        <end position="15"/>
    </location>
</feature>
<gene>
    <name type="primary">KCTD13</name>
</gene>
<protein>
    <recommendedName>
        <fullName>BTB/POZ domain-containing adapter for CUL3-mediated RhoA degradation protein 1</fullName>
    </recommendedName>
    <alternativeName>
        <fullName>BTB/POZ domain-containing protein KCTD13</fullName>
    </alternativeName>
</protein>
<organism>
    <name type="scientific">Bos taurus</name>
    <name type="common">Bovine</name>
    <dbReference type="NCBI Taxonomy" id="9913"/>
    <lineage>
        <taxon>Eukaryota</taxon>
        <taxon>Metazoa</taxon>
        <taxon>Chordata</taxon>
        <taxon>Craniata</taxon>
        <taxon>Vertebrata</taxon>
        <taxon>Euteleostomi</taxon>
        <taxon>Mammalia</taxon>
        <taxon>Eutheria</taxon>
        <taxon>Laurasiatheria</taxon>
        <taxon>Artiodactyla</taxon>
        <taxon>Ruminantia</taxon>
        <taxon>Pecora</taxon>
        <taxon>Bovidae</taxon>
        <taxon>Bovinae</taxon>
        <taxon>Bos</taxon>
    </lineage>
</organism>
<dbReference type="EMBL" id="BC111242">
    <property type="protein sequence ID" value="AAI11243.1"/>
    <property type="molecule type" value="mRNA"/>
</dbReference>
<dbReference type="RefSeq" id="NP_001033146.1">
    <property type="nucleotide sequence ID" value="NM_001038057.2"/>
</dbReference>
<dbReference type="SMR" id="Q2T9W0"/>
<dbReference type="FunCoup" id="Q2T9W0">
    <property type="interactions" value="1494"/>
</dbReference>
<dbReference type="STRING" id="9913.ENSBTAP00000021258"/>
<dbReference type="PaxDb" id="9913-ENSBTAP00000021258"/>
<dbReference type="GeneID" id="507911"/>
<dbReference type="KEGG" id="bta:507911"/>
<dbReference type="CTD" id="253980"/>
<dbReference type="eggNOG" id="KOG2716">
    <property type="taxonomic scope" value="Eukaryota"/>
</dbReference>
<dbReference type="InParanoid" id="Q2T9W0"/>
<dbReference type="OrthoDB" id="2333377at2759"/>
<dbReference type="UniPathway" id="UPA00143"/>
<dbReference type="Proteomes" id="UP000009136">
    <property type="component" value="Unplaced"/>
</dbReference>
<dbReference type="GO" id="GO:0031463">
    <property type="term" value="C:Cul3-RING ubiquitin ligase complex"/>
    <property type="evidence" value="ECO:0000250"/>
    <property type="project" value="UniProtKB"/>
</dbReference>
<dbReference type="GO" id="GO:0005634">
    <property type="term" value="C:nucleus"/>
    <property type="evidence" value="ECO:0007669"/>
    <property type="project" value="UniProtKB-SubCell"/>
</dbReference>
<dbReference type="GO" id="GO:0031267">
    <property type="term" value="F:small GTPase binding"/>
    <property type="evidence" value="ECO:0000250"/>
    <property type="project" value="UniProtKB"/>
</dbReference>
<dbReference type="GO" id="GO:0016477">
    <property type="term" value="P:cell migration"/>
    <property type="evidence" value="ECO:0000250"/>
    <property type="project" value="UniProtKB"/>
</dbReference>
<dbReference type="GO" id="GO:0035024">
    <property type="term" value="P:negative regulation of Rho protein signal transduction"/>
    <property type="evidence" value="ECO:0000250"/>
    <property type="project" value="UniProtKB"/>
</dbReference>
<dbReference type="GO" id="GO:0050806">
    <property type="term" value="P:positive regulation of synaptic transmission"/>
    <property type="evidence" value="ECO:0000250"/>
    <property type="project" value="UniProtKB"/>
</dbReference>
<dbReference type="GO" id="GO:0043161">
    <property type="term" value="P:proteasome-mediated ubiquitin-dependent protein catabolic process"/>
    <property type="evidence" value="ECO:0000250"/>
    <property type="project" value="UniProtKB"/>
</dbReference>
<dbReference type="GO" id="GO:0051260">
    <property type="term" value="P:protein homooligomerization"/>
    <property type="evidence" value="ECO:0007669"/>
    <property type="project" value="InterPro"/>
</dbReference>
<dbReference type="GO" id="GO:0016567">
    <property type="term" value="P:protein ubiquitination"/>
    <property type="evidence" value="ECO:0000250"/>
    <property type="project" value="UniProtKB"/>
</dbReference>
<dbReference type="GO" id="GO:0043149">
    <property type="term" value="P:stress fiber assembly"/>
    <property type="evidence" value="ECO:0000250"/>
    <property type="project" value="UniProtKB"/>
</dbReference>
<dbReference type="CDD" id="cd18400">
    <property type="entry name" value="BTB_POZ_KCTD13_BACURD1"/>
    <property type="match status" value="1"/>
</dbReference>
<dbReference type="FunFam" id="3.30.710.10:FF:000013">
    <property type="entry name" value="BTB/POZ domain-containing adapter for CUL3-mediated RhoA degradation protein 3"/>
    <property type="match status" value="1"/>
</dbReference>
<dbReference type="Gene3D" id="3.30.710.10">
    <property type="entry name" value="Potassium Channel Kv1.1, Chain A"/>
    <property type="match status" value="1"/>
</dbReference>
<dbReference type="InterPro" id="IPR045068">
    <property type="entry name" value="BACURD1-3"/>
</dbReference>
<dbReference type="InterPro" id="IPR000210">
    <property type="entry name" value="BTB/POZ_dom"/>
</dbReference>
<dbReference type="InterPro" id="IPR011333">
    <property type="entry name" value="SKP1/BTB/POZ_sf"/>
</dbReference>
<dbReference type="InterPro" id="IPR003131">
    <property type="entry name" value="T1-type_BTB"/>
</dbReference>
<dbReference type="PANTHER" id="PTHR11145">
    <property type="entry name" value="BTB/POZ DOMAIN-CONTAINING ADAPTER FOR CUL3-MEDIATED RHOA DEGRADATION PROTEIN FAMILY MEMBER"/>
    <property type="match status" value="1"/>
</dbReference>
<dbReference type="PANTHER" id="PTHR11145:SF18">
    <property type="entry name" value="BTB_POZ DOMAIN-CONTAINING ADAPTER FOR CUL3-MEDIATED RHOA DEGRADATION PROTEIN 1"/>
    <property type="match status" value="1"/>
</dbReference>
<dbReference type="Pfam" id="PF02214">
    <property type="entry name" value="BTB_2"/>
    <property type="match status" value="1"/>
</dbReference>
<dbReference type="SMART" id="SM00225">
    <property type="entry name" value="BTB"/>
    <property type="match status" value="1"/>
</dbReference>
<dbReference type="SUPFAM" id="SSF54695">
    <property type="entry name" value="POZ domain"/>
    <property type="match status" value="1"/>
</dbReference>
<evidence type="ECO:0000250" key="1">
    <source>
        <dbReference type="UniProtKB" id="Q8BGV7"/>
    </source>
</evidence>
<evidence type="ECO:0000250" key="2">
    <source>
        <dbReference type="UniProtKB" id="Q8WZ19"/>
    </source>
</evidence>
<evidence type="ECO:0000256" key="3">
    <source>
        <dbReference type="SAM" id="MobiDB-lite"/>
    </source>
</evidence>
<evidence type="ECO:0000305" key="4"/>
<name>BACD1_BOVIN</name>
<comment type="function">
    <text evidence="1">Substrate-specific adapter of a BCR (BTB-CUL3-RBX1) E3 ubiquitin-protein ligase complex required for synaptic transmission. The BCR(KCTD13) E3 ubiquitin ligase complex mediates the ubiquitination of RHOA, leading to its degradation by the proteasome, thereby regulating the actin cytoskeleton and promoting synaptic transmission.</text>
</comment>
<comment type="pathway">
    <text evidence="2">Protein modification; protein ubiquitination.</text>
</comment>
<comment type="subunit">
    <text evidence="2">Homotetramer; forms a two-fold symmetric tetramer in solution. Interacts with CUL3; interaction is direct and forms a 5:5 heterodecamer. Component of the BCR(KCTD13) E3 ubiquitin ligase complex, at least composed of CUL3, KCTD13/BACURD1 and RBX1. Interacts with RHOA; with a preference for RhoA-GDP. Interacts with POLD2 and PCNA. Interacts with SPRTN.</text>
</comment>
<comment type="subcellular location">
    <subcellularLocation>
        <location evidence="2">Nucleus</location>
    </subcellularLocation>
</comment>
<comment type="similarity">
    <text evidence="4">Belongs to the BACURD family.</text>
</comment>